<evidence type="ECO:0000250" key="1">
    <source>
        <dbReference type="UniProtKB" id="O82645"/>
    </source>
</evidence>
<evidence type="ECO:0000255" key="2">
    <source>
        <dbReference type="PROSITE-ProRule" id="PRU00116"/>
    </source>
</evidence>
<evidence type="ECO:0000256" key="3">
    <source>
        <dbReference type="SAM" id="MobiDB-lite"/>
    </source>
</evidence>
<evidence type="ECO:0000269" key="4">
    <source ref="3"/>
</evidence>
<evidence type="ECO:0000303" key="5">
    <source ref="3"/>
</evidence>
<evidence type="ECO:0000305" key="6"/>
<evidence type="ECO:0000312" key="7">
    <source>
        <dbReference type="Araport" id="AT3G13600"/>
    </source>
</evidence>
<evidence type="ECO:0000312" key="8">
    <source>
        <dbReference type="EMBL" id="BAB02602.1"/>
    </source>
</evidence>
<protein>
    <recommendedName>
        <fullName evidence="6">IQ domain-containing protein IQM2</fullName>
    </recommendedName>
    <alternativeName>
        <fullName evidence="5">IQ motif-containing protein 2</fullName>
    </alternativeName>
</protein>
<sequence length="605" mass="68946">MGVSFSCPFAEQDDVEAALDSVTVKSISFGDDDECKTPKRSVNFNDGTLEPTILKSMGSGKMVVEKSVSLKGMQLERMISLNRSVKDNGFEIAKEFSVLDPRNPKHEAAIKLQKVYKSFRTRRKLADCAVLVEQSWWKLLDFAELKRSSISFFDIEKHETAISRWSRARTRAAKVGKGLSKNGKAQKLALQHWLEAIDPRHRYGHNLHFYYNKWLHCQSREPFFYWLDIGEGKEVNLVEKCPRLKLQQQCIKYLGPMERKAYEVVVEDGKFFYKHSGEILQTSDMEDSESKWIFVLSTSKVLYVGKKKKGTFQHSSFLAGGATVAAGRLVVENGVLKAVWPHSGHYQPTEENFMDFLSFLRENDVDITDVKMSPTDEDEFSIYKQRSTHMRNHSLEEDLEAEKTISFQDKVDPSGEEQTLMRNESISRKQSDLETPEKMESFSTFGDEIQSVGSKSTKVSEDYDSGDDEEEEEEMFELEQESMPSEQSSPRGEEKEEGETKESEVVKITEESILKRINSKKETKSFQLGKQLSCKWTTGAGPRIGCVRDYPSELQFQALEQVNLSPRSASVSRLCFSSSSQTQTPQMSPLWRGMSLPTDITLTNS</sequence>
<comment type="function">
    <text evidence="1">May be involved in biotic and abiotic stress responses.</text>
</comment>
<comment type="subcellular location">
    <subcellularLocation>
        <location evidence="1">Cytoplasm</location>
    </subcellularLocation>
    <subcellularLocation>
        <location evidence="1">Nucleus</location>
    </subcellularLocation>
</comment>
<comment type="tissue specificity">
    <text evidence="4">Expressed in rosette and cauline leaves, stems, flowers and siliques, and at lower levels in roots.</text>
</comment>
<comment type="induction">
    <text evidence="4">By light. Down-regulated by treatment with mannitol.</text>
</comment>
<comment type="disruption phenotype">
    <text evidence="4">Long hypocotyl phenotype.</text>
</comment>
<organism>
    <name type="scientific">Arabidopsis thaliana</name>
    <name type="common">Mouse-ear cress</name>
    <dbReference type="NCBI Taxonomy" id="3702"/>
    <lineage>
        <taxon>Eukaryota</taxon>
        <taxon>Viridiplantae</taxon>
        <taxon>Streptophyta</taxon>
        <taxon>Embryophyta</taxon>
        <taxon>Tracheophyta</taxon>
        <taxon>Spermatophyta</taxon>
        <taxon>Magnoliopsida</taxon>
        <taxon>eudicotyledons</taxon>
        <taxon>Gunneridae</taxon>
        <taxon>Pentapetalae</taxon>
        <taxon>rosids</taxon>
        <taxon>malvids</taxon>
        <taxon>Brassicales</taxon>
        <taxon>Brassicaceae</taxon>
        <taxon>Camelineae</taxon>
        <taxon>Arabidopsis</taxon>
    </lineage>
</organism>
<reference key="1">
    <citation type="journal article" date="2000" name="DNA Res.">
        <title>Structural analysis of Arabidopsis thaliana chromosome 3. II. Sequence features of the 4,251,695 bp regions covered by 90 P1, TAC and BAC clones.</title>
        <authorList>
            <person name="Kaneko T."/>
            <person name="Katoh T."/>
            <person name="Sato S."/>
            <person name="Nakamura Y."/>
            <person name="Asamizu E."/>
            <person name="Tabata S."/>
        </authorList>
    </citation>
    <scope>NUCLEOTIDE SEQUENCE [LARGE SCALE GENOMIC DNA]</scope>
    <source>
        <strain>cv. Columbia</strain>
    </source>
</reference>
<reference key="2">
    <citation type="journal article" date="2017" name="Plant J.">
        <title>Araport11: a complete reannotation of the Arabidopsis thaliana reference genome.</title>
        <authorList>
            <person name="Cheng C.Y."/>
            <person name="Krishnakumar V."/>
            <person name="Chan A.P."/>
            <person name="Thibaud-Nissen F."/>
            <person name="Schobel S."/>
            <person name="Town C.D."/>
        </authorList>
    </citation>
    <scope>GENOME REANNOTATION</scope>
    <source>
        <strain>cv. Columbia</strain>
    </source>
</reference>
<reference key="3">
    <citation type="journal article" date="2010" name="Acta Physiol. Plant.">
        <title>Sequence and expression analysis of the Arabidopsis IQM family.</title>
        <authorList>
            <person name="Zhou Y."/>
            <person name="Chen Y."/>
            <person name="Yamamoto K.T."/>
            <person name="Duan J."/>
            <person name="Tian C."/>
        </authorList>
    </citation>
    <scope>GENE FAMILY</scope>
    <scope>NOMENCLATURE</scope>
    <scope>TISSUE SPECIFICITY</scope>
    <scope>INDUCTION</scope>
    <scope>DISRUPTION PHENOTYPE</scope>
</reference>
<feature type="chain" id="PRO_0000433918" description="IQ domain-containing protein IQM2">
    <location>
        <begin position="1"/>
        <end position="605"/>
    </location>
</feature>
<feature type="domain" description="IQ" evidence="2">
    <location>
        <begin position="105"/>
        <end position="134"/>
    </location>
</feature>
<feature type="region of interest" description="Disordered" evidence="3">
    <location>
        <begin position="408"/>
        <end position="505"/>
    </location>
</feature>
<feature type="compositionally biased region" description="Basic and acidic residues" evidence="3">
    <location>
        <begin position="425"/>
        <end position="440"/>
    </location>
</feature>
<feature type="compositionally biased region" description="Acidic residues" evidence="3">
    <location>
        <begin position="462"/>
        <end position="480"/>
    </location>
</feature>
<feature type="compositionally biased region" description="Low complexity" evidence="3">
    <location>
        <begin position="481"/>
        <end position="490"/>
    </location>
</feature>
<feature type="compositionally biased region" description="Basic and acidic residues" evidence="3">
    <location>
        <begin position="491"/>
        <end position="505"/>
    </location>
</feature>
<name>IQM2_ARATH</name>
<keyword id="KW-0963">Cytoplasm</keyword>
<keyword id="KW-0539">Nucleus</keyword>
<keyword id="KW-1185">Reference proteome</keyword>
<dbReference type="EMBL" id="AP002038">
    <property type="protein sequence ID" value="BAB02602.1"/>
    <property type="molecule type" value="Genomic_DNA"/>
</dbReference>
<dbReference type="EMBL" id="CP002686">
    <property type="protein sequence ID" value="AEE75381.1"/>
    <property type="molecule type" value="Genomic_DNA"/>
</dbReference>
<dbReference type="EMBL" id="CP002686">
    <property type="protein sequence ID" value="ANM64201.1"/>
    <property type="molecule type" value="Genomic_DNA"/>
</dbReference>
<dbReference type="RefSeq" id="NP_001319541.1">
    <property type="nucleotide sequence ID" value="NM_001338063.1"/>
</dbReference>
<dbReference type="RefSeq" id="NP_187969.1">
    <property type="nucleotide sequence ID" value="NM_112206.1"/>
</dbReference>
<dbReference type="STRING" id="3702.Q9LHN9"/>
<dbReference type="iPTMnet" id="Q9LHN9"/>
<dbReference type="PaxDb" id="3702-AT3G13600.1"/>
<dbReference type="ProteomicsDB" id="250654"/>
<dbReference type="EnsemblPlants" id="AT3G13600.1">
    <property type="protein sequence ID" value="AT3G13600.1"/>
    <property type="gene ID" value="AT3G13600"/>
</dbReference>
<dbReference type="EnsemblPlants" id="AT3G13600.2">
    <property type="protein sequence ID" value="AT3G13600.2"/>
    <property type="gene ID" value="AT3G13600"/>
</dbReference>
<dbReference type="GeneID" id="820562"/>
<dbReference type="Gramene" id="AT3G13600.1">
    <property type="protein sequence ID" value="AT3G13600.1"/>
    <property type="gene ID" value="AT3G13600"/>
</dbReference>
<dbReference type="Gramene" id="AT3G13600.2">
    <property type="protein sequence ID" value="AT3G13600.2"/>
    <property type="gene ID" value="AT3G13600"/>
</dbReference>
<dbReference type="KEGG" id="ath:AT3G13600"/>
<dbReference type="Araport" id="AT3G13600"/>
<dbReference type="TAIR" id="AT3G13600"/>
<dbReference type="eggNOG" id="ENOG502QRIN">
    <property type="taxonomic scope" value="Eukaryota"/>
</dbReference>
<dbReference type="HOGENOM" id="CLU_026344_0_0_1"/>
<dbReference type="InParanoid" id="Q9LHN9"/>
<dbReference type="OMA" id="ASHKEMK"/>
<dbReference type="OrthoDB" id="7344096at2759"/>
<dbReference type="PhylomeDB" id="Q9LHN9"/>
<dbReference type="PRO" id="PR:Q9LHN9"/>
<dbReference type="Proteomes" id="UP000006548">
    <property type="component" value="Chromosome 3"/>
</dbReference>
<dbReference type="ExpressionAtlas" id="Q9LHN9">
    <property type="expression patterns" value="baseline and differential"/>
</dbReference>
<dbReference type="GO" id="GO:0005737">
    <property type="term" value="C:cytoplasm"/>
    <property type="evidence" value="ECO:0007669"/>
    <property type="project" value="UniProtKB-SubCell"/>
</dbReference>
<dbReference type="GO" id="GO:0005634">
    <property type="term" value="C:nucleus"/>
    <property type="evidence" value="ECO:0007669"/>
    <property type="project" value="UniProtKB-SubCell"/>
</dbReference>
<dbReference type="InterPro" id="IPR044159">
    <property type="entry name" value="IQM"/>
</dbReference>
<dbReference type="PANTHER" id="PTHR31250:SF14">
    <property type="entry name" value="IQ DOMAIN-CONTAINING PROTEIN IQM2"/>
    <property type="match status" value="1"/>
</dbReference>
<dbReference type="PANTHER" id="PTHR31250">
    <property type="entry name" value="IQ DOMAIN-CONTAINING PROTEIN IQM3"/>
    <property type="match status" value="1"/>
</dbReference>
<gene>
    <name evidence="5" type="primary">IQM2</name>
    <name evidence="7" type="ordered locus">At3g13600</name>
    <name evidence="8" type="ORF">K20M4.4</name>
</gene>
<proteinExistence type="evidence at transcript level"/>
<accession>Q9LHN9</accession>